<organism>
    <name type="scientific">Chitinophaga pinensis (strain ATCC 43595 / DSM 2588 / LMG 13176 / NBRC 15968 / NCIMB 11800 / UQM 2034)</name>
    <dbReference type="NCBI Taxonomy" id="485918"/>
    <lineage>
        <taxon>Bacteria</taxon>
        <taxon>Pseudomonadati</taxon>
        <taxon>Bacteroidota</taxon>
        <taxon>Chitinophagia</taxon>
        <taxon>Chitinophagales</taxon>
        <taxon>Chitinophagaceae</taxon>
        <taxon>Chitinophaga</taxon>
    </lineage>
</organism>
<sequence>MRPLDVTPTISPGAQDLPRTMHFAAEPPLQPLIIDITEEEKLEITYIGKKLKRKYKSYDDPGFISMLHLNAYTLLPERIAKVLSNFGTDFSDQQYGAVVLRGLIEIGQDELGPTPRSWQETDHEKIMEYGFISSLLHGAVPSKPVEYFAQRKGGGLMHAIIPDENMSFTQTGSGSRTDLFVHTEDAFLHNAADFLSFLFLRNEERVPSTLYSIRSHGRPDAILQELFKPIYKCPKDANYASEEALGDDIRTSVLYGSRSAPFMRFDAAEQIYNEDANQDPEALHNLKRFWEEARKLIYNDFVPESGDLIFVNNHLCAHGRNAFLAGFREENGQLVKCERRLMLRMMSKTSLINIREVTHPENPYLIMEEHYGKVYSAHLANL</sequence>
<protein>
    <recommendedName>
        <fullName evidence="5">L-lysine 4-hydroxylase</fullName>
        <ecNumber evidence="2">1.14.11.-</ecNumber>
    </recommendedName>
    <alternativeName>
        <fullName evidence="3">Alpha-ketoglutarate-dependent dioxygenase</fullName>
    </alternativeName>
    <alternativeName>
        <fullName evidence="3">KDO2</fullName>
    </alternativeName>
    <alternativeName>
        <fullName evidence="3">L-lysine hydroxylase</fullName>
    </alternativeName>
</protein>
<proteinExistence type="evidence at protein level"/>
<evidence type="ECO:0000250" key="1">
    <source>
        <dbReference type="UniProtKB" id="Q9Z4Z5"/>
    </source>
</evidence>
<evidence type="ECO:0000269" key="2">
    <source ref="2"/>
</evidence>
<evidence type="ECO:0000303" key="3">
    <source ref="2"/>
</evidence>
<evidence type="ECO:0000305" key="4"/>
<evidence type="ECO:0000305" key="5">
    <source ref="2"/>
</evidence>
<evidence type="ECO:0000312" key="6">
    <source>
        <dbReference type="EMBL" id="ACU60313.1"/>
    </source>
</evidence>
<feature type="chain" id="PRO_0000435693" description="L-lysine 4-hydroxylase">
    <location>
        <begin position="1"/>
        <end position="382"/>
    </location>
</feature>
<feature type="binding site" evidence="1">
    <location>
        <position position="182"/>
    </location>
    <ligand>
        <name>Fe cation</name>
        <dbReference type="ChEBI" id="CHEBI:24875"/>
    </ligand>
</feature>
<feature type="binding site" evidence="1">
    <location>
        <position position="184"/>
    </location>
    <ligand>
        <name>Fe cation</name>
        <dbReference type="ChEBI" id="CHEBI:24875"/>
    </ligand>
</feature>
<feature type="binding site" evidence="1">
    <location>
        <position position="318"/>
    </location>
    <ligand>
        <name>Fe cation</name>
        <dbReference type="ChEBI" id="CHEBI:24875"/>
    </ligand>
</feature>
<dbReference type="EC" id="1.14.11.-" evidence="2"/>
<dbReference type="EMBL" id="CP001699">
    <property type="protein sequence ID" value="ACU60313.1"/>
    <property type="molecule type" value="Genomic_DNA"/>
</dbReference>
<dbReference type="RefSeq" id="WP_012790489.1">
    <property type="nucleotide sequence ID" value="NC_013132.1"/>
</dbReference>
<dbReference type="SMR" id="C7PLM6"/>
<dbReference type="STRING" id="485918.Cpin_2834"/>
<dbReference type="KEGG" id="cpi:Cpin_2834"/>
<dbReference type="eggNOG" id="COG2175">
    <property type="taxonomic scope" value="Bacteria"/>
</dbReference>
<dbReference type="HOGENOM" id="CLU_722989_0_0_10"/>
<dbReference type="Proteomes" id="UP000002215">
    <property type="component" value="Chromosome"/>
</dbReference>
<dbReference type="GO" id="GO:0016706">
    <property type="term" value="F:2-oxoglutarate-dependent dioxygenase activity"/>
    <property type="evidence" value="ECO:0000314"/>
    <property type="project" value="UniProtKB"/>
</dbReference>
<dbReference type="GO" id="GO:0046872">
    <property type="term" value="F:metal ion binding"/>
    <property type="evidence" value="ECO:0007669"/>
    <property type="project" value="UniProtKB-KW"/>
</dbReference>
<dbReference type="Gene3D" id="3.60.130.10">
    <property type="entry name" value="Clavaminate synthase-like"/>
    <property type="match status" value="1"/>
</dbReference>
<dbReference type="InterPro" id="IPR042098">
    <property type="entry name" value="TauD-like_sf"/>
</dbReference>
<dbReference type="SUPFAM" id="SSF51197">
    <property type="entry name" value="Clavaminate synthase-like"/>
    <property type="match status" value="1"/>
</dbReference>
<accession>C7PLM6</accession>
<name>LYS4O_CHIPD</name>
<keyword id="KW-0223">Dioxygenase</keyword>
<keyword id="KW-0408">Iron</keyword>
<keyword id="KW-0479">Metal-binding</keyword>
<keyword id="KW-0560">Oxidoreductase</keyword>
<gene>
    <name evidence="6" type="ordered locus">Cpin_2834</name>
</gene>
<reference key="1">
    <citation type="submission" date="2009-08" db="EMBL/GenBank/DDBJ databases">
        <title>The complete genome of Chitinophaga pinensis DSM 2588.</title>
        <authorList>
            <consortium name="US DOE Joint Genome Institute (JGI-PGF)"/>
            <person name="Lucas S."/>
            <person name="Copeland A."/>
            <person name="Lapidus A."/>
            <person name="Glavina del Rio T."/>
            <person name="Dalin E."/>
            <person name="Tice H."/>
            <person name="Bruce D."/>
            <person name="Goodwin L."/>
            <person name="Pitluck S."/>
            <person name="Kyrpides N."/>
            <person name="Mavromatis K."/>
            <person name="Ivanova N."/>
            <person name="Mikhailova N."/>
            <person name="Sims D."/>
            <person name="Meinche L."/>
            <person name="Brettin T."/>
            <person name="Detter J.C."/>
            <person name="Han C."/>
            <person name="Larimer F."/>
            <person name="Land M."/>
            <person name="Hauser L."/>
            <person name="Markowitz V."/>
            <person name="Cheng J.-F."/>
            <person name="Hugenholtz P."/>
            <person name="Woyke T."/>
            <person name="Wu D."/>
            <person name="Spring S."/>
            <person name="Klenk H.-P."/>
            <person name="Eisen J.A."/>
        </authorList>
    </citation>
    <scope>NUCLEOTIDE SEQUENCE [LARGE SCALE GENOMIC DNA]</scope>
    <source>
        <strain>ATCC 43595 / DSM 2588 / LMG 13176 / NBRC 15968 / NCIMB 11800 / UQM 2034</strain>
    </source>
</reference>
<reference key="2">
    <citation type="journal article" date="2014" name="ChemCatChem">
        <title>Synthesis of mono- and dihydroxylated amino acids with new alpha-ketoglutarate-dependent dioxygenases: biocatalytic oxidation of C-H bonds.</title>
        <authorList>
            <person name="Baud D."/>
            <person name="Saaidi P.-L."/>
            <person name="Monfleur A."/>
            <person name="Harari M."/>
            <person name="Cuccaro J."/>
            <person name="Fossey A."/>
            <person name="Besnard M."/>
            <person name="Debard A."/>
            <person name="Mariage A."/>
            <person name="Pellouin V."/>
            <person name="Petit J.-L."/>
            <person name="Salanoubat M."/>
            <person name="Weissenbach J."/>
            <person name="de Berardinis V."/>
            <person name="Zaparucha A."/>
        </authorList>
    </citation>
    <scope>FUNCTION</scope>
    <scope>CATALYTIC ACTIVITY</scope>
    <scope>SUBSTRATE SPECIFICITY</scope>
    <scope>BIOTECHNOLOGY</scope>
</reference>
<comment type="function">
    <text evidence="2">Alpha-ketoglutarate-dependent dioxygenase that in vitro catalyzes the regio- and stereoselective hydroxylation of L-lysine, leading to (4R)-4-hydroxy-L-lysine. Cannot use D-lysine or L-ornithine as substrate.</text>
</comment>
<comment type="catalytic activity">
    <reaction evidence="2">
        <text>L-lysine + 2-oxoglutarate + O2 = (4R)-4-hydroxy-L-lysine + succinate + CO2</text>
        <dbReference type="Rhea" id="RHEA:42420"/>
        <dbReference type="ChEBI" id="CHEBI:15379"/>
        <dbReference type="ChEBI" id="CHEBI:16526"/>
        <dbReference type="ChEBI" id="CHEBI:16810"/>
        <dbReference type="ChEBI" id="CHEBI:30031"/>
        <dbReference type="ChEBI" id="CHEBI:32551"/>
        <dbReference type="ChEBI" id="CHEBI:77410"/>
    </reaction>
</comment>
<comment type="cofactor">
    <cofactor evidence="1">
        <name>Fe(2+)</name>
        <dbReference type="ChEBI" id="CHEBI:29033"/>
    </cofactor>
    <text evidence="1">Binds 1 Fe(2+) ion per subunit.</text>
</comment>
<comment type="biotechnology">
    <text evidence="5">Being totally regio- and stereoselective, this enzyme is of interest for biocatalytic purposes to produce chiral scaffolds that are of synthetic value in the preparation of more complex functionalized chiral molecules such as natural products and analogs.</text>
</comment>
<comment type="similarity">
    <text evidence="4">Belongs to the clavaminate synthase family.</text>
</comment>